<comment type="function">
    <text evidence="2">Oxidoreductase; part of the gene cluster that mediates the biosynthesis of campesine G, a dimeric indole piperazine alkaloid that shows good insecticidal activity Galleria mellonella (PubMed:38527935). Within the pathway, cpsB reduces the unstable (S,S)-trypyl-valyl dihydropiperazine (didehydrocampesine A) intermediate to (S, S)-trypyl-valyl-piperazine (campesine A) using two equivalents of NAD(P)H (PubMed:38527935). The non-canonical non-ribosomal peptide synthetase cpsA catalyzes the first steps of the pathway by producing L-tryptophanal and L-valinal from their respective amino-acids. These products condensate spontaneously to form trypyl-valyl pyrazine also known as didehydrocampesine A. The NmrA-like family domain-containing oxidoreductase cpsB is the next enzyme in cps pathway and reduces the unstable didehydrocampesine A to campesine A. The methyltransferase cpsF and the acetyltransferase cpsE both recognize N13 of piperazine ring to carry out methylation and acetylation of campesine A to produce campesine C and B, respectively. The cytochrome P450 monooxygenase cpsD then acts as a dimerase that catalyzes oxidative heterocoupling between campesine B and C to produce heterodimers with unexpected 6/5/6/6/6/6/5/6 eight-ring scaffold called campesine D. Finally,the cytochrome P450 monooxygenase cpsC is a regioselective dehydrogenase that catalyzes dehydrogenation reaction towards C2-N1 to produce campesine G (PubMed:38527935).</text>
</comment>
<comment type="catalytic activity">
    <reaction evidence="2">
        <text>didehydrocampesine A + 2 AH2 = campesine A + 2 A</text>
        <dbReference type="Rhea" id="RHEA:83463"/>
        <dbReference type="ChEBI" id="CHEBI:13193"/>
        <dbReference type="ChEBI" id="CHEBI:17499"/>
        <dbReference type="ChEBI" id="CHEBI:232509"/>
        <dbReference type="ChEBI" id="CHEBI:233013"/>
    </reaction>
    <physiologicalReaction direction="left-to-right" evidence="2">
        <dbReference type="Rhea" id="RHEA:83464"/>
    </physiologicalReaction>
</comment>
<comment type="pathway">
    <text evidence="2">Alkaloid biosynthesis.</text>
</comment>
<comment type="biotechnology">
    <text evidence="2">Campesine G features good insecticidal activity against the global honeybee pest Galleria mellonella, which supports its future application in the development of biopesticides.</text>
</comment>
<comment type="similarity">
    <text evidence="4">Belongs to the NmrA-type oxidoreductase family.</text>
</comment>
<name>CPSB_ASPC2</name>
<proteinExistence type="evidence at protein level"/>
<feature type="chain" id="PRO_0000461452" description="NmrA-like family domain-containing oxidoreductase cpsB">
    <location>
        <begin position="1"/>
        <end position="339"/>
    </location>
</feature>
<feature type="binding site" evidence="1">
    <location>
        <position position="142"/>
    </location>
    <ligand>
        <name>NADP(+)</name>
        <dbReference type="ChEBI" id="CHEBI:58349"/>
    </ligand>
</feature>
<gene>
    <name evidence="3" type="primary">cpsB</name>
    <name type="ORF">P168DRAFT_299953</name>
</gene>
<organism>
    <name type="scientific">Aspergillus campestris (strain IBT 28561)</name>
    <dbReference type="NCBI Taxonomy" id="1392248"/>
    <lineage>
        <taxon>Eukaryota</taxon>
        <taxon>Fungi</taxon>
        <taxon>Dikarya</taxon>
        <taxon>Ascomycota</taxon>
        <taxon>Pezizomycotina</taxon>
        <taxon>Eurotiomycetes</taxon>
        <taxon>Eurotiomycetidae</taxon>
        <taxon>Eurotiales</taxon>
        <taxon>Aspergillaceae</taxon>
        <taxon>Aspergillus</taxon>
        <taxon>Aspergillus subgen. Circumdati</taxon>
    </lineage>
</organism>
<accession>A0A2I1CSG7</accession>
<sequence length="339" mass="36923">MTIPSASKTLVTVYGATGSQGGSVARSLLQNTEFAVRAITRNASSTSAQNLKALGAEVVQADGWNKSQVQEAFSGSWAAFVNTNSEDPMFMSDDGPTEFDLGKIIIDGIVESGSVEHLVYSSAVSTSAFTQGEVTAKAAEMKSRVEKYAMATGYFKSVCPVYAGWYMELFNNTDFARVFGGFPKFPDAEGYLTLSTPRWGAKTDMPVPWVAVEKDFGDIVHGVLLAPERYHGKVIPALSDASSFPQVVDAFQSATGKNVRYVRQAKWDMFGAGIPELEDQRRLFHFGELTNGKYFGDEPTSTTVPAYLKAQAAKAKNKGVDDEAELLTLNQWFRSGFRQ</sequence>
<reference key="1">
    <citation type="submission" date="2016-12" db="EMBL/GenBank/DDBJ databases">
        <title>The genomes of Aspergillus section Nigri reveals drivers in fungal speciation.</title>
        <authorList>
            <consortium name="DOE Joint Genome Institute"/>
            <person name="Vesth T.C."/>
            <person name="Nybo J."/>
            <person name="Theobald S."/>
            <person name="Brandl J."/>
            <person name="Frisvad J.C."/>
            <person name="Nielsen K.F."/>
            <person name="Lyhne E.K."/>
            <person name="Kogle M.E."/>
            <person name="Kuo A."/>
            <person name="Riley R."/>
            <person name="Clum A."/>
            <person name="Nolan M."/>
            <person name="Lipzen A."/>
            <person name="Salamov A."/>
            <person name="Henrissat B."/>
            <person name="Wiebenga A."/>
            <person name="De Vries R.P."/>
            <person name="Grigoriev I.V."/>
            <person name="Mortensen U.H."/>
            <person name="Andersen M.R."/>
            <person name="Baker S.E."/>
        </authorList>
    </citation>
    <scope>NUCLEOTIDE SEQUENCE [LARGE SCALE GENOMIC DNA]</scope>
    <source>
        <strain>IBT 28561</strain>
    </source>
</reference>
<reference key="2">
    <citation type="journal article" date="2024" name="Angew. Chem. Int. Ed.">
        <title>A Cytochrome P450 Catalyzes Oxidative Coupling Formation of Insecticidal Dimeric Indole Piperazine Alkaloids.</title>
        <authorList>
            <person name="He Q."/>
            <person name="Zhang H.R."/>
            <person name="Zou Y."/>
        </authorList>
    </citation>
    <scope>FUNCTION</scope>
    <scope>CATALYTIC ACTIVITY</scope>
    <scope>BIOTECHNOLOGY</scope>
    <scope>PATHWAY</scope>
</reference>
<evidence type="ECO:0000250" key="1">
    <source>
        <dbReference type="UniProtKB" id="Q9HBL8"/>
    </source>
</evidence>
<evidence type="ECO:0000269" key="2">
    <source>
    </source>
</evidence>
<evidence type="ECO:0000303" key="3">
    <source>
    </source>
</evidence>
<evidence type="ECO:0000305" key="4"/>
<protein>
    <recommendedName>
        <fullName evidence="3">NmrA-like family domain-containing oxidoreductase cpsB</fullName>
        <ecNumber evidence="2">1.3.1.-</ecNumber>
    </recommendedName>
    <alternativeName>
        <fullName evidence="3">Campesines biosynthesis cluster protein B</fullName>
    </alternativeName>
</protein>
<dbReference type="EC" id="1.3.1.-" evidence="2"/>
<dbReference type="EMBL" id="MSFM01000014">
    <property type="protein sequence ID" value="PKY00572.1"/>
    <property type="molecule type" value="Genomic_DNA"/>
</dbReference>
<dbReference type="SMR" id="A0A2I1CSG7"/>
<dbReference type="VEuPathDB" id="FungiDB:P168DRAFT_299953"/>
<dbReference type="OrthoDB" id="300709at2759"/>
<dbReference type="Proteomes" id="UP000234254">
    <property type="component" value="Unassembled WGS sequence"/>
</dbReference>
<dbReference type="GO" id="GO:0005634">
    <property type="term" value="C:nucleus"/>
    <property type="evidence" value="ECO:0007669"/>
    <property type="project" value="TreeGrafter"/>
</dbReference>
<dbReference type="GO" id="GO:0016491">
    <property type="term" value="F:oxidoreductase activity"/>
    <property type="evidence" value="ECO:0007669"/>
    <property type="project" value="UniProtKB-KW"/>
</dbReference>
<dbReference type="GO" id="GO:0009820">
    <property type="term" value="P:alkaloid metabolic process"/>
    <property type="evidence" value="ECO:0007669"/>
    <property type="project" value="UniProtKB-KW"/>
</dbReference>
<dbReference type="CDD" id="cd05251">
    <property type="entry name" value="NmrA_like_SDR_a"/>
    <property type="match status" value="1"/>
</dbReference>
<dbReference type="Gene3D" id="3.40.50.720">
    <property type="entry name" value="NAD(P)-binding Rossmann-like Domain"/>
    <property type="match status" value="1"/>
</dbReference>
<dbReference type="Gene3D" id="3.90.25.10">
    <property type="entry name" value="UDP-galactose 4-epimerase, domain 1"/>
    <property type="match status" value="1"/>
</dbReference>
<dbReference type="InterPro" id="IPR036291">
    <property type="entry name" value="NAD(P)-bd_dom_sf"/>
</dbReference>
<dbReference type="InterPro" id="IPR008030">
    <property type="entry name" value="NmrA-like"/>
</dbReference>
<dbReference type="InterPro" id="IPR051164">
    <property type="entry name" value="NmrA-like_oxidored"/>
</dbReference>
<dbReference type="PANTHER" id="PTHR42748">
    <property type="entry name" value="NITROGEN METABOLITE REPRESSION PROTEIN NMRA FAMILY MEMBER"/>
    <property type="match status" value="1"/>
</dbReference>
<dbReference type="PANTHER" id="PTHR42748:SF31">
    <property type="entry name" value="NMRA-LIKE DOMAIN-CONTAINING PROTEIN-RELATED"/>
    <property type="match status" value="1"/>
</dbReference>
<dbReference type="Pfam" id="PF05368">
    <property type="entry name" value="NmrA"/>
    <property type="match status" value="1"/>
</dbReference>
<dbReference type="SUPFAM" id="SSF51735">
    <property type="entry name" value="NAD(P)-binding Rossmann-fold domains"/>
    <property type="match status" value="1"/>
</dbReference>
<keyword id="KW-0017">Alkaloid metabolism</keyword>
<keyword id="KW-0521">NADP</keyword>
<keyword id="KW-0560">Oxidoreductase</keyword>